<evidence type="ECO:0000255" key="1">
    <source>
        <dbReference type="HAMAP-Rule" id="MF_00121"/>
    </source>
</evidence>
<accession>Q5LPK1</accession>
<protein>
    <recommendedName>
        <fullName evidence="1">Aspartyl/glutamyl-tRNA(Asn/Gln) amidotransferase subunit B</fullName>
        <shortName evidence="1">Asp/Glu-ADT subunit B</shortName>
        <ecNumber evidence="1">6.3.5.-</ecNumber>
    </recommendedName>
</protein>
<sequence>MLDLTFETPKPKTIAGAKHDWELVIGMEVHAQVASQAKLFSGASTAFGAEPNSNVSFVDAAMPGMLPVINEFCVEQAVRTGLGLKAEINLKSAFDRKNYFYPDLPQGYQISQLYHPIVGEGEVLVEMGDGTARRVRIERIHMEQDAGKSIHDMDPNMSFVDLNRTGVCLMEIVSRPDIRGPEEAAAYIAKLRQILRYLGTCDGNMQNGNLRADVNVSICRPGAYEKYQETQDFSHLGTRCEIKNMNSMRFIQAAIEYEARRQIAIVEAGGEVDQETRLYDPDKNETRSMRSKEEAHDYRYFPDPDLLPLEIEQAWVDDIAASLPELPDDKKARFIKEFGLTDYDASVLTAEVESARYFEEVAQGRNGKLAANWVINELFGRLKKEDHDITDSPVSPSQLGGIIDLIASDAISGKIAKDLFEIVYTEGGDPAEIVEARGMKQVTDTGAIEAALDEIIAANPAQVEKAKVNPKLAGWFVGQVMKATGGKANPGVVNQMVSKKLNG</sequence>
<proteinExistence type="inferred from homology"/>
<feature type="chain" id="PRO_0000241275" description="Aspartyl/glutamyl-tRNA(Asn/Gln) amidotransferase subunit B">
    <location>
        <begin position="1"/>
        <end position="503"/>
    </location>
</feature>
<keyword id="KW-0067">ATP-binding</keyword>
<keyword id="KW-0436">Ligase</keyword>
<keyword id="KW-0547">Nucleotide-binding</keyword>
<keyword id="KW-0648">Protein biosynthesis</keyword>
<keyword id="KW-1185">Reference proteome</keyword>
<gene>
    <name evidence="1" type="primary">gatB</name>
    <name type="ordered locus">SPO2847</name>
</gene>
<comment type="function">
    <text evidence="1">Allows the formation of correctly charged Asn-tRNA(Asn) or Gln-tRNA(Gln) through the transamidation of misacylated Asp-tRNA(Asn) or Glu-tRNA(Gln) in organisms which lack either or both of asparaginyl-tRNA or glutaminyl-tRNA synthetases. The reaction takes place in the presence of glutamine and ATP through an activated phospho-Asp-tRNA(Asn) or phospho-Glu-tRNA(Gln).</text>
</comment>
<comment type="catalytic activity">
    <reaction evidence="1">
        <text>L-glutamyl-tRNA(Gln) + L-glutamine + ATP + H2O = L-glutaminyl-tRNA(Gln) + L-glutamate + ADP + phosphate + H(+)</text>
        <dbReference type="Rhea" id="RHEA:17521"/>
        <dbReference type="Rhea" id="RHEA-COMP:9681"/>
        <dbReference type="Rhea" id="RHEA-COMP:9684"/>
        <dbReference type="ChEBI" id="CHEBI:15377"/>
        <dbReference type="ChEBI" id="CHEBI:15378"/>
        <dbReference type="ChEBI" id="CHEBI:29985"/>
        <dbReference type="ChEBI" id="CHEBI:30616"/>
        <dbReference type="ChEBI" id="CHEBI:43474"/>
        <dbReference type="ChEBI" id="CHEBI:58359"/>
        <dbReference type="ChEBI" id="CHEBI:78520"/>
        <dbReference type="ChEBI" id="CHEBI:78521"/>
        <dbReference type="ChEBI" id="CHEBI:456216"/>
    </reaction>
</comment>
<comment type="catalytic activity">
    <reaction evidence="1">
        <text>L-aspartyl-tRNA(Asn) + L-glutamine + ATP + H2O = L-asparaginyl-tRNA(Asn) + L-glutamate + ADP + phosphate + 2 H(+)</text>
        <dbReference type="Rhea" id="RHEA:14513"/>
        <dbReference type="Rhea" id="RHEA-COMP:9674"/>
        <dbReference type="Rhea" id="RHEA-COMP:9677"/>
        <dbReference type="ChEBI" id="CHEBI:15377"/>
        <dbReference type="ChEBI" id="CHEBI:15378"/>
        <dbReference type="ChEBI" id="CHEBI:29985"/>
        <dbReference type="ChEBI" id="CHEBI:30616"/>
        <dbReference type="ChEBI" id="CHEBI:43474"/>
        <dbReference type="ChEBI" id="CHEBI:58359"/>
        <dbReference type="ChEBI" id="CHEBI:78515"/>
        <dbReference type="ChEBI" id="CHEBI:78516"/>
        <dbReference type="ChEBI" id="CHEBI:456216"/>
    </reaction>
</comment>
<comment type="subunit">
    <text evidence="1">Heterotrimer of A, B and C subunits.</text>
</comment>
<comment type="similarity">
    <text evidence="1">Belongs to the GatB/GatE family. GatB subfamily.</text>
</comment>
<name>GATB_RUEPO</name>
<reference key="1">
    <citation type="journal article" date="2004" name="Nature">
        <title>Genome sequence of Silicibacter pomeroyi reveals adaptations to the marine environment.</title>
        <authorList>
            <person name="Moran M.A."/>
            <person name="Buchan A."/>
            <person name="Gonzalez J.M."/>
            <person name="Heidelberg J.F."/>
            <person name="Whitman W.B."/>
            <person name="Kiene R.P."/>
            <person name="Henriksen J.R."/>
            <person name="King G.M."/>
            <person name="Belas R."/>
            <person name="Fuqua C."/>
            <person name="Brinkac L.M."/>
            <person name="Lewis M."/>
            <person name="Johri S."/>
            <person name="Weaver B."/>
            <person name="Pai G."/>
            <person name="Eisen J.A."/>
            <person name="Rahe E."/>
            <person name="Sheldon W.M."/>
            <person name="Ye W."/>
            <person name="Miller T.R."/>
            <person name="Carlton J."/>
            <person name="Rasko D.A."/>
            <person name="Paulsen I.T."/>
            <person name="Ren Q."/>
            <person name="Daugherty S.C."/>
            <person name="DeBoy R.T."/>
            <person name="Dodson R.J."/>
            <person name="Durkin A.S."/>
            <person name="Madupu R."/>
            <person name="Nelson W.C."/>
            <person name="Sullivan S.A."/>
            <person name="Rosovitz M.J."/>
            <person name="Haft D.H."/>
            <person name="Selengut J."/>
            <person name="Ward N."/>
        </authorList>
    </citation>
    <scope>NUCLEOTIDE SEQUENCE [LARGE SCALE GENOMIC DNA]</scope>
    <source>
        <strain>ATCC 700808 / DSM 15171 / DSS-3</strain>
    </source>
</reference>
<reference key="2">
    <citation type="journal article" date="2014" name="Stand. Genomic Sci.">
        <title>An updated genome annotation for the model marine bacterium Ruegeria pomeroyi DSS-3.</title>
        <authorList>
            <person name="Rivers A.R."/>
            <person name="Smith C.B."/>
            <person name="Moran M.A."/>
        </authorList>
    </citation>
    <scope>GENOME REANNOTATION</scope>
    <source>
        <strain>ATCC 700808 / DSM 15171 / DSS-3</strain>
    </source>
</reference>
<dbReference type="EC" id="6.3.5.-" evidence="1"/>
<dbReference type="EMBL" id="CP000031">
    <property type="protein sequence ID" value="AAV96088.1"/>
    <property type="molecule type" value="Genomic_DNA"/>
</dbReference>
<dbReference type="RefSeq" id="WP_011048547.1">
    <property type="nucleotide sequence ID" value="NC_003911.12"/>
</dbReference>
<dbReference type="SMR" id="Q5LPK1"/>
<dbReference type="STRING" id="246200.SPO2847"/>
<dbReference type="PaxDb" id="246200-SPO2847"/>
<dbReference type="KEGG" id="sil:SPO2847"/>
<dbReference type="eggNOG" id="COG0064">
    <property type="taxonomic scope" value="Bacteria"/>
</dbReference>
<dbReference type="HOGENOM" id="CLU_019240_0_0_5"/>
<dbReference type="OrthoDB" id="9804078at2"/>
<dbReference type="Proteomes" id="UP000001023">
    <property type="component" value="Chromosome"/>
</dbReference>
<dbReference type="GO" id="GO:0050566">
    <property type="term" value="F:asparaginyl-tRNA synthase (glutamine-hydrolyzing) activity"/>
    <property type="evidence" value="ECO:0007669"/>
    <property type="project" value="RHEA"/>
</dbReference>
<dbReference type="GO" id="GO:0005524">
    <property type="term" value="F:ATP binding"/>
    <property type="evidence" value="ECO:0007669"/>
    <property type="project" value="UniProtKB-KW"/>
</dbReference>
<dbReference type="GO" id="GO:0050567">
    <property type="term" value="F:glutaminyl-tRNA synthase (glutamine-hydrolyzing) activity"/>
    <property type="evidence" value="ECO:0007669"/>
    <property type="project" value="UniProtKB-UniRule"/>
</dbReference>
<dbReference type="GO" id="GO:0070681">
    <property type="term" value="P:glutaminyl-tRNAGln biosynthesis via transamidation"/>
    <property type="evidence" value="ECO:0007669"/>
    <property type="project" value="TreeGrafter"/>
</dbReference>
<dbReference type="GO" id="GO:0006412">
    <property type="term" value="P:translation"/>
    <property type="evidence" value="ECO:0007669"/>
    <property type="project" value="UniProtKB-UniRule"/>
</dbReference>
<dbReference type="FunFam" id="1.10.10.410:FF:000001">
    <property type="entry name" value="Aspartyl/glutamyl-tRNA(Asn/Gln) amidotransferase subunit B"/>
    <property type="match status" value="1"/>
</dbReference>
<dbReference type="FunFam" id="1.10.150.380:FF:000001">
    <property type="entry name" value="Aspartyl/glutamyl-tRNA(Asn/Gln) amidotransferase subunit B"/>
    <property type="match status" value="1"/>
</dbReference>
<dbReference type="Gene3D" id="1.10.10.410">
    <property type="match status" value="1"/>
</dbReference>
<dbReference type="Gene3D" id="1.10.150.380">
    <property type="entry name" value="GatB domain, N-terminal subdomain"/>
    <property type="match status" value="1"/>
</dbReference>
<dbReference type="HAMAP" id="MF_00121">
    <property type="entry name" value="GatB"/>
    <property type="match status" value="1"/>
</dbReference>
<dbReference type="InterPro" id="IPR017959">
    <property type="entry name" value="Asn/Gln-tRNA_amidoTrfase_suB/E"/>
</dbReference>
<dbReference type="InterPro" id="IPR006075">
    <property type="entry name" value="Asn/Gln-tRNA_Trfase_suB/E_cat"/>
</dbReference>
<dbReference type="InterPro" id="IPR018027">
    <property type="entry name" value="Asn/Gln_amidotransferase"/>
</dbReference>
<dbReference type="InterPro" id="IPR003789">
    <property type="entry name" value="Asn/Gln_tRNA_amidoTrase-B-like"/>
</dbReference>
<dbReference type="InterPro" id="IPR004413">
    <property type="entry name" value="GatB"/>
</dbReference>
<dbReference type="InterPro" id="IPR042114">
    <property type="entry name" value="GatB_C_1"/>
</dbReference>
<dbReference type="InterPro" id="IPR023168">
    <property type="entry name" value="GatB_Yqey_C_2"/>
</dbReference>
<dbReference type="InterPro" id="IPR014746">
    <property type="entry name" value="Gln_synth/guanido_kin_cat_dom"/>
</dbReference>
<dbReference type="NCBIfam" id="TIGR00133">
    <property type="entry name" value="gatB"/>
    <property type="match status" value="1"/>
</dbReference>
<dbReference type="NCBIfam" id="NF004012">
    <property type="entry name" value="PRK05477.1-2"/>
    <property type="match status" value="1"/>
</dbReference>
<dbReference type="NCBIfam" id="NF004014">
    <property type="entry name" value="PRK05477.1-4"/>
    <property type="match status" value="1"/>
</dbReference>
<dbReference type="NCBIfam" id="NF004015">
    <property type="entry name" value="PRK05477.1-5"/>
    <property type="match status" value="1"/>
</dbReference>
<dbReference type="PANTHER" id="PTHR11659">
    <property type="entry name" value="GLUTAMYL-TRNA GLN AMIDOTRANSFERASE SUBUNIT B MITOCHONDRIAL AND PROKARYOTIC PET112-RELATED"/>
    <property type="match status" value="1"/>
</dbReference>
<dbReference type="PANTHER" id="PTHR11659:SF0">
    <property type="entry name" value="GLUTAMYL-TRNA(GLN) AMIDOTRANSFERASE SUBUNIT B, MITOCHONDRIAL"/>
    <property type="match status" value="1"/>
</dbReference>
<dbReference type="Pfam" id="PF02934">
    <property type="entry name" value="GatB_N"/>
    <property type="match status" value="1"/>
</dbReference>
<dbReference type="Pfam" id="PF02637">
    <property type="entry name" value="GatB_Yqey"/>
    <property type="match status" value="1"/>
</dbReference>
<dbReference type="SMART" id="SM00845">
    <property type="entry name" value="GatB_Yqey"/>
    <property type="match status" value="1"/>
</dbReference>
<dbReference type="SUPFAM" id="SSF89095">
    <property type="entry name" value="GatB/YqeY motif"/>
    <property type="match status" value="1"/>
</dbReference>
<dbReference type="SUPFAM" id="SSF55931">
    <property type="entry name" value="Glutamine synthetase/guanido kinase"/>
    <property type="match status" value="1"/>
</dbReference>
<organism>
    <name type="scientific">Ruegeria pomeroyi (strain ATCC 700808 / DSM 15171 / DSS-3)</name>
    <name type="common">Silicibacter pomeroyi</name>
    <dbReference type="NCBI Taxonomy" id="246200"/>
    <lineage>
        <taxon>Bacteria</taxon>
        <taxon>Pseudomonadati</taxon>
        <taxon>Pseudomonadota</taxon>
        <taxon>Alphaproteobacteria</taxon>
        <taxon>Rhodobacterales</taxon>
        <taxon>Roseobacteraceae</taxon>
        <taxon>Ruegeria</taxon>
    </lineage>
</organism>